<organism>
    <name type="scientific">Saccharomyces cerevisiae (strain ATCC 204508 / S288c)</name>
    <name type="common">Baker's yeast</name>
    <dbReference type="NCBI Taxonomy" id="559292"/>
    <lineage>
        <taxon>Eukaryota</taxon>
        <taxon>Fungi</taxon>
        <taxon>Dikarya</taxon>
        <taxon>Ascomycota</taxon>
        <taxon>Saccharomycotina</taxon>
        <taxon>Saccharomycetes</taxon>
        <taxon>Saccharomycetales</taxon>
        <taxon>Saccharomycetaceae</taxon>
        <taxon>Saccharomyces</taxon>
    </lineage>
</organism>
<comment type="subcellular location">
    <subcellularLocation>
        <location evidence="3">Nucleus</location>
        <location evidence="3">Nucleolus</location>
    </subcellularLocation>
</comment>
<comment type="miscellaneous">
    <text evidence="4">Present with 3430 molecules/cell in log phase SD medium.</text>
</comment>
<comment type="similarity">
    <text evidence="5">Belongs to the UPF0743 family.</text>
</comment>
<name>YC16_YEAST</name>
<protein>
    <recommendedName>
        <fullName>UPF0743 protein YCR087C-A</fullName>
    </recommendedName>
</protein>
<accession>P37263</accession>
<accession>D6VR87</accession>
<dbReference type="EMBL" id="X59720">
    <property type="protein sequence ID" value="CAA42263.1"/>
    <property type="molecule type" value="Genomic_DNA"/>
</dbReference>
<dbReference type="EMBL" id="AY557640">
    <property type="protein sequence ID" value="AAS55966.1"/>
    <property type="molecule type" value="Genomic_DNA"/>
</dbReference>
<dbReference type="EMBL" id="BK006937">
    <property type="protein sequence ID" value="DAA07556.1"/>
    <property type="molecule type" value="Genomic_DNA"/>
</dbReference>
<dbReference type="PIR" id="S70049">
    <property type="entry name" value="S70049"/>
</dbReference>
<dbReference type="RefSeq" id="NP_010011.1">
    <property type="nucleotide sequence ID" value="NM_001184316.1"/>
</dbReference>
<dbReference type="SMR" id="P37263"/>
<dbReference type="BioGRID" id="31059">
    <property type="interactions" value="116"/>
</dbReference>
<dbReference type="DIP" id="DIP-4536N"/>
<dbReference type="FunCoup" id="P37263">
    <property type="interactions" value="116"/>
</dbReference>
<dbReference type="IntAct" id="P37263">
    <property type="interactions" value="30"/>
</dbReference>
<dbReference type="MINT" id="P37263"/>
<dbReference type="STRING" id="4932.YCR087C-A"/>
<dbReference type="GlyGen" id="P37263">
    <property type="glycosylation" value="1 site"/>
</dbReference>
<dbReference type="iPTMnet" id="P37263"/>
<dbReference type="PaxDb" id="4932-YCR087C-A"/>
<dbReference type="PeptideAtlas" id="P37263"/>
<dbReference type="EnsemblFungi" id="YCR087C-A_mRNA">
    <property type="protein sequence ID" value="YCR087C-A"/>
    <property type="gene ID" value="YCR087C-A"/>
</dbReference>
<dbReference type="GeneID" id="850449"/>
<dbReference type="KEGG" id="sce:YCR087C-A"/>
<dbReference type="AGR" id="SGD:S000007223"/>
<dbReference type="SGD" id="S000007223">
    <property type="gene designation" value="YCR087C-A"/>
</dbReference>
<dbReference type="VEuPathDB" id="FungiDB:YCR087C-A"/>
<dbReference type="eggNOG" id="KOG2186">
    <property type="taxonomic scope" value="Eukaryota"/>
</dbReference>
<dbReference type="GeneTree" id="ENSGT00390000003477"/>
<dbReference type="HOGENOM" id="CLU_098018_0_0_1"/>
<dbReference type="InParanoid" id="P37263"/>
<dbReference type="OMA" id="MTEAQRY"/>
<dbReference type="OrthoDB" id="21474at2759"/>
<dbReference type="BioCyc" id="YEAST:G3O-29416-MONOMER"/>
<dbReference type="BioGRID-ORCS" id="850449">
    <property type="hits" value="0 hits in 10 CRISPR screens"/>
</dbReference>
<dbReference type="PRO" id="PR:P37263"/>
<dbReference type="Proteomes" id="UP000002311">
    <property type="component" value="Chromosome III"/>
</dbReference>
<dbReference type="RNAct" id="P37263">
    <property type="molecule type" value="protein"/>
</dbReference>
<dbReference type="GO" id="GO:0005730">
    <property type="term" value="C:nucleolus"/>
    <property type="evidence" value="ECO:0007005"/>
    <property type="project" value="SGD"/>
</dbReference>
<dbReference type="GO" id="GO:0003677">
    <property type="term" value="F:DNA binding"/>
    <property type="evidence" value="ECO:0000318"/>
    <property type="project" value="GO_Central"/>
</dbReference>
<dbReference type="GO" id="GO:0008270">
    <property type="term" value="F:zinc ion binding"/>
    <property type="evidence" value="ECO:0007669"/>
    <property type="project" value="UniProtKB-KW"/>
</dbReference>
<dbReference type="GO" id="GO:0000122">
    <property type="term" value="P:negative regulation of transcription by RNA polymerase II"/>
    <property type="evidence" value="ECO:0000318"/>
    <property type="project" value="GO_Central"/>
</dbReference>
<dbReference type="GO" id="GO:0006364">
    <property type="term" value="P:rRNA processing"/>
    <property type="evidence" value="ECO:0000318"/>
    <property type="project" value="GO_Central"/>
</dbReference>
<dbReference type="FunFam" id="3.30.1490.490:FF:000001">
    <property type="entry name" value="cell growth-regulating nucleolar protein-like"/>
    <property type="match status" value="1"/>
</dbReference>
<dbReference type="Gene3D" id="3.30.1490.490">
    <property type="match status" value="1"/>
</dbReference>
<dbReference type="InterPro" id="IPR039999">
    <property type="entry name" value="LYAR"/>
</dbReference>
<dbReference type="InterPro" id="IPR014898">
    <property type="entry name" value="Znf_C2H2_LYAR"/>
</dbReference>
<dbReference type="InterPro" id="IPR036236">
    <property type="entry name" value="Znf_C2H2_sf"/>
</dbReference>
<dbReference type="InterPro" id="IPR013087">
    <property type="entry name" value="Znf_C2H2_type"/>
</dbReference>
<dbReference type="PANTHER" id="PTHR13100:SF10">
    <property type="entry name" value="CELL GROWTH-REGULATING NUCLEOLAR PROTEIN"/>
    <property type="match status" value="1"/>
</dbReference>
<dbReference type="PANTHER" id="PTHR13100">
    <property type="entry name" value="CELL GROWTH-REGULATING NUCLEOLAR PROTEIN LYAR"/>
    <property type="match status" value="1"/>
</dbReference>
<dbReference type="Pfam" id="PF08790">
    <property type="entry name" value="zf-LYAR"/>
    <property type="match status" value="1"/>
</dbReference>
<dbReference type="SUPFAM" id="SSF57667">
    <property type="entry name" value="beta-beta-alpha zinc fingers"/>
    <property type="match status" value="2"/>
</dbReference>
<dbReference type="PROSITE" id="PS51804">
    <property type="entry name" value="ZF_C2HC_LYAR"/>
    <property type="match status" value="2"/>
</dbReference>
<dbReference type="PROSITE" id="PS50157">
    <property type="entry name" value="ZINC_FINGER_C2H2_2"/>
    <property type="match status" value="1"/>
</dbReference>
<reference key="1">
    <citation type="journal article" date="1992" name="Nature">
        <title>The complete DNA sequence of yeast chromosome III.</title>
        <authorList>
            <person name="Oliver S.G."/>
            <person name="van der Aart Q.J.M."/>
            <person name="Agostoni-Carbone M.L."/>
            <person name="Aigle M."/>
            <person name="Alberghina L."/>
            <person name="Alexandraki D."/>
            <person name="Antoine G."/>
            <person name="Anwar R."/>
            <person name="Ballesta J.P.G."/>
            <person name="Benit P."/>
            <person name="Berben G."/>
            <person name="Bergantino E."/>
            <person name="Biteau N."/>
            <person name="Bolle P.-A."/>
            <person name="Bolotin-Fukuhara M."/>
            <person name="Brown A."/>
            <person name="Brown A.J.P."/>
            <person name="Buhler J.-M."/>
            <person name="Carcano C."/>
            <person name="Carignani G."/>
            <person name="Cederberg H."/>
            <person name="Chanet R."/>
            <person name="Contreras R."/>
            <person name="Crouzet M."/>
            <person name="Daignan-Fornier B."/>
            <person name="Defoor E."/>
            <person name="Delgado M.D."/>
            <person name="Demolder J."/>
            <person name="Doira C."/>
            <person name="Dubois E."/>
            <person name="Dujon B."/>
            <person name="Duesterhoeft A."/>
            <person name="Erdmann D."/>
            <person name="Esteban M."/>
            <person name="Fabre F."/>
            <person name="Fairhead C."/>
            <person name="Faye G."/>
            <person name="Feldmann H."/>
            <person name="Fiers W."/>
            <person name="Francingues-Gaillard M.-C."/>
            <person name="Franco L."/>
            <person name="Frontali L."/>
            <person name="Fukuhara H."/>
            <person name="Fuller L.J."/>
            <person name="Galland P."/>
            <person name="Gent M.E."/>
            <person name="Gigot D."/>
            <person name="Gilliquet V."/>
            <person name="Glansdorff N."/>
            <person name="Goffeau A."/>
            <person name="Grenson M."/>
            <person name="Grisanti P."/>
            <person name="Grivell L.A."/>
            <person name="de Haan M."/>
            <person name="Haasemann M."/>
            <person name="Hatat D."/>
            <person name="Hoenicka J."/>
            <person name="Hegemann J.H."/>
            <person name="Herbert C.J."/>
            <person name="Hilger F."/>
            <person name="Hohmann S."/>
            <person name="Hollenberg C.P."/>
            <person name="Huse K."/>
            <person name="Iborra F."/>
            <person name="Indge K.J."/>
            <person name="Isono K."/>
            <person name="Jacq C."/>
            <person name="Jacquet M."/>
            <person name="James C.M."/>
            <person name="Jauniaux J.-C."/>
            <person name="Jia Y."/>
            <person name="Jimenez A."/>
            <person name="Kelly A."/>
            <person name="Kleinhans U."/>
            <person name="Kreisl P."/>
            <person name="Lanfranchi G."/>
            <person name="Lewis C."/>
            <person name="van der Linden C.G."/>
            <person name="Lucchini G."/>
            <person name="Lutzenkirchen K."/>
            <person name="Maat M.J."/>
            <person name="Mallet L."/>
            <person name="Mannhaupt G."/>
            <person name="Martegani E."/>
            <person name="Mathieu A."/>
            <person name="Maurer C.T.C."/>
            <person name="McConnell D."/>
            <person name="McKee R.A."/>
            <person name="Messenguy F."/>
            <person name="Mewes H.-W."/>
            <person name="Molemans F."/>
            <person name="Montague M.A."/>
            <person name="Muzi Falconi M."/>
            <person name="Navas L."/>
            <person name="Newlon C.S."/>
            <person name="Noone D."/>
            <person name="Pallier C."/>
            <person name="Panzeri L."/>
            <person name="Pearson B.M."/>
            <person name="Perea J."/>
            <person name="Philippsen P."/>
            <person name="Pierard A."/>
            <person name="Planta R.J."/>
            <person name="Plevani P."/>
            <person name="Poetsch B."/>
            <person name="Pohl F.M."/>
            <person name="Purnelle B."/>
            <person name="Ramezani Rad M."/>
            <person name="Rasmussen S.W."/>
            <person name="Raynal A."/>
            <person name="Remacha M.A."/>
            <person name="Richterich P."/>
            <person name="Roberts A.B."/>
            <person name="Rodriguez F."/>
            <person name="Sanz E."/>
            <person name="Schaaff-Gerstenschlaeger I."/>
            <person name="Scherens B."/>
            <person name="Schweitzer B."/>
            <person name="Shu Y."/>
            <person name="Skala J."/>
            <person name="Slonimski P.P."/>
            <person name="Sor F."/>
            <person name="Soustelle C."/>
            <person name="Spiegelberg R."/>
            <person name="Stateva L.I."/>
            <person name="Steensma H.Y."/>
            <person name="Steiner S."/>
            <person name="Thierry A."/>
            <person name="Thireos G."/>
            <person name="Tzermia M."/>
            <person name="Urrestarazu L.A."/>
            <person name="Valle G."/>
            <person name="Vetter I."/>
            <person name="van Vliet-Reedijk J.C."/>
            <person name="Voet M."/>
            <person name="Volckaert G."/>
            <person name="Vreken P."/>
            <person name="Wang H."/>
            <person name="Warmington J.R."/>
            <person name="von Wettstein D."/>
            <person name="Wicksteed B.L."/>
            <person name="Wilson C."/>
            <person name="Wurst H."/>
            <person name="Xu G."/>
            <person name="Yoshikawa A."/>
            <person name="Zimmermann F.K."/>
            <person name="Sgouros J.G."/>
        </authorList>
    </citation>
    <scope>NUCLEOTIDE SEQUENCE [LARGE SCALE GENOMIC DNA]</scope>
    <source>
        <strain>ATCC 204508 / S288c</strain>
    </source>
</reference>
<reference key="2">
    <citation type="journal article" date="2014" name="G3 (Bethesda)">
        <title>The reference genome sequence of Saccharomyces cerevisiae: Then and now.</title>
        <authorList>
            <person name="Engel S.R."/>
            <person name="Dietrich F.S."/>
            <person name="Fisk D.G."/>
            <person name="Binkley G."/>
            <person name="Balakrishnan R."/>
            <person name="Costanzo M.C."/>
            <person name="Dwight S.S."/>
            <person name="Hitz B.C."/>
            <person name="Karra K."/>
            <person name="Nash R.S."/>
            <person name="Weng S."/>
            <person name="Wong E.D."/>
            <person name="Lloyd P."/>
            <person name="Skrzypek M.S."/>
            <person name="Miyasato S.R."/>
            <person name="Simison M."/>
            <person name="Cherry J.M."/>
        </authorList>
    </citation>
    <scope>GENOME REANNOTATION</scope>
    <source>
        <strain>ATCC 204508 / S288c</strain>
    </source>
</reference>
<reference key="3">
    <citation type="journal article" date="2007" name="Genome Res.">
        <title>Approaching a complete repository of sequence-verified protein-encoding clones for Saccharomyces cerevisiae.</title>
        <authorList>
            <person name="Hu Y."/>
            <person name="Rolfs A."/>
            <person name="Bhullar B."/>
            <person name="Murthy T.V.S."/>
            <person name="Zhu C."/>
            <person name="Berger M.F."/>
            <person name="Camargo A.A."/>
            <person name="Kelley F."/>
            <person name="McCarron S."/>
            <person name="Jepson D."/>
            <person name="Richardson A."/>
            <person name="Raphael J."/>
            <person name="Moreira D."/>
            <person name="Taycher E."/>
            <person name="Zuo D."/>
            <person name="Mohr S."/>
            <person name="Kane M.F."/>
            <person name="Williamson J."/>
            <person name="Simpson A.J.G."/>
            <person name="Bulyk M.L."/>
            <person name="Harlow E."/>
            <person name="Marsischky G."/>
            <person name="Kolodner R.D."/>
            <person name="LaBaer J."/>
        </authorList>
    </citation>
    <scope>NUCLEOTIDE SEQUENCE [GENOMIC DNA]</scope>
    <source>
        <strain>ATCC 204508 / S288c</strain>
    </source>
</reference>
<reference key="4">
    <citation type="journal article" date="1994" name="EMBO J.">
        <title>Yeast chromosome III: new gene functions.</title>
        <authorList>
            <person name="Koonin E.V."/>
            <person name="Bork P."/>
            <person name="Sander C."/>
        </authorList>
    </citation>
    <scope>IDENTIFICATION</scope>
    <scope>SIMILARITY</scope>
</reference>
<reference key="5">
    <citation type="journal article" date="2003" name="Nature">
        <title>Global analysis of protein localization in budding yeast.</title>
        <authorList>
            <person name="Huh W.-K."/>
            <person name="Falvo J.V."/>
            <person name="Gerke L.C."/>
            <person name="Carroll A.S."/>
            <person name="Howson R.W."/>
            <person name="Weissman J.S."/>
            <person name="O'Shea E.K."/>
        </authorList>
    </citation>
    <scope>SUBCELLULAR LOCATION [LARGE SCALE ANALYSIS]</scope>
</reference>
<reference key="6">
    <citation type="journal article" date="2003" name="Nature">
        <title>Global analysis of protein expression in yeast.</title>
        <authorList>
            <person name="Ghaemmaghami S."/>
            <person name="Huh W.-K."/>
            <person name="Bower K."/>
            <person name="Howson R.W."/>
            <person name="Belle A."/>
            <person name="Dephoure N."/>
            <person name="O'Shea E.K."/>
            <person name="Weissman J.S."/>
        </authorList>
    </citation>
    <scope>LEVEL OF PROTEIN EXPRESSION [LARGE SCALE ANALYSIS]</scope>
</reference>
<keyword id="KW-0479">Metal-binding</keyword>
<keyword id="KW-0539">Nucleus</keyword>
<keyword id="KW-1185">Reference proteome</keyword>
<keyword id="KW-0677">Repeat</keyword>
<keyword id="KW-0862">Zinc</keyword>
<keyword id="KW-0863">Zinc-finger</keyword>
<proteinExistence type="evidence at protein level"/>
<evidence type="ECO:0000255" key="1">
    <source>
        <dbReference type="PROSITE-ProRule" id="PRU01145"/>
    </source>
</evidence>
<evidence type="ECO:0000256" key="2">
    <source>
        <dbReference type="SAM" id="MobiDB-lite"/>
    </source>
</evidence>
<evidence type="ECO:0000269" key="3">
    <source>
    </source>
</evidence>
<evidence type="ECO:0000269" key="4">
    <source>
    </source>
</evidence>
<evidence type="ECO:0000305" key="5"/>
<sequence length="153" mass="17738">MVTFNCEVCNDTVPKKNTEKHYYRCPNAYYTCIDCSKTFEDGVSYKNHTSCISEDEKYQKALYKGNKKQKQKQQQKQQQKQHQHQPVATPAKKVEKPVIKKAEKVEKTSNGIELHKGKSLYKILKTMKDKGAKKTFLKSLVVDSEGQIRYAKE</sequence>
<gene>
    <name type="ordered locus">YCR087C-A</name>
    <name type="ORF">YCRX16C</name>
</gene>
<feature type="chain" id="PRO_0000202578" description="UPF0743 protein YCR087C-A">
    <location>
        <begin position="1"/>
        <end position="153"/>
    </location>
</feature>
<feature type="zinc finger region" description="C2HC LYAR-type 1" evidence="1">
    <location>
        <begin position="1"/>
        <end position="26"/>
    </location>
</feature>
<feature type="zinc finger region" description="C2HC LYAR-type 2" evidence="1">
    <location>
        <begin position="27"/>
        <end position="52"/>
    </location>
</feature>
<feature type="region of interest" description="Disordered" evidence="2">
    <location>
        <begin position="63"/>
        <end position="96"/>
    </location>
</feature>
<feature type="compositionally biased region" description="Basic residues" evidence="2">
    <location>
        <begin position="65"/>
        <end position="83"/>
    </location>
</feature>
<feature type="binding site" evidence="1">
    <location>
        <position position="6"/>
    </location>
    <ligand>
        <name>Zn(2+)</name>
        <dbReference type="ChEBI" id="CHEBI:29105"/>
        <label>1</label>
    </ligand>
</feature>
<feature type="binding site" evidence="1">
    <location>
        <position position="9"/>
    </location>
    <ligand>
        <name>Zn(2+)</name>
        <dbReference type="ChEBI" id="CHEBI:29105"/>
        <label>1</label>
    </ligand>
</feature>
<feature type="binding site" evidence="1">
    <location>
        <position position="21"/>
    </location>
    <ligand>
        <name>Zn(2+)</name>
        <dbReference type="ChEBI" id="CHEBI:29105"/>
        <label>1</label>
    </ligand>
</feature>
<feature type="binding site" evidence="1">
    <location>
        <position position="25"/>
    </location>
    <ligand>
        <name>Zn(2+)</name>
        <dbReference type="ChEBI" id="CHEBI:29105"/>
        <label>1</label>
    </ligand>
</feature>
<feature type="binding site" evidence="1">
    <location>
        <position position="32"/>
    </location>
    <ligand>
        <name>Zn(2+)</name>
        <dbReference type="ChEBI" id="CHEBI:29105"/>
        <label>2</label>
    </ligand>
</feature>
<feature type="binding site" evidence="1">
    <location>
        <position position="35"/>
    </location>
    <ligand>
        <name>Zn(2+)</name>
        <dbReference type="ChEBI" id="CHEBI:29105"/>
        <label>2</label>
    </ligand>
</feature>
<feature type="binding site" evidence="1">
    <location>
        <position position="48"/>
    </location>
    <ligand>
        <name>Zn(2+)</name>
        <dbReference type="ChEBI" id="CHEBI:29105"/>
        <label>2</label>
    </ligand>
</feature>
<feature type="binding site" evidence="1">
    <location>
        <position position="51"/>
    </location>
    <ligand>
        <name>Zn(2+)</name>
        <dbReference type="ChEBI" id="CHEBI:29105"/>
        <label>2</label>
    </ligand>
</feature>